<feature type="signal peptide" evidence="1">
    <location>
        <begin position="1"/>
        <end position="18"/>
    </location>
</feature>
<feature type="propeptide" id="PRO_0000002000" evidence="2">
    <location>
        <begin position="19"/>
        <end position="24"/>
    </location>
</feature>
<feature type="chain" id="PRO_0000002001" description="Apolipoprotein Eb">
    <location>
        <begin position="25"/>
        <end position="281"/>
    </location>
</feature>
<feature type="repeat" description="1">
    <location>
        <begin position="67"/>
        <end position="88"/>
    </location>
</feature>
<feature type="repeat" description="2">
    <location>
        <begin position="89"/>
        <end position="110"/>
    </location>
</feature>
<feature type="repeat" description="3">
    <location>
        <begin position="111"/>
        <end position="132"/>
    </location>
</feature>
<feature type="repeat" description="4">
    <location>
        <begin position="133"/>
        <end position="154"/>
    </location>
</feature>
<feature type="repeat" description="5">
    <location>
        <begin position="155"/>
        <end position="176"/>
    </location>
</feature>
<feature type="repeat" description="6">
    <location>
        <begin position="177"/>
        <end position="199"/>
    </location>
</feature>
<feature type="repeat" description="7">
    <location>
        <begin position="200"/>
        <end position="227"/>
    </location>
</feature>
<feature type="repeat" description="8">
    <location>
        <begin position="228"/>
        <end position="249"/>
    </location>
</feature>
<feature type="repeat" description="9">
    <location>
        <begin position="254"/>
        <end position="281"/>
    </location>
</feature>
<feature type="region of interest" description="3 X approximate tandem repeats">
    <location>
        <begin position="34"/>
        <end position="66"/>
    </location>
</feature>
<feature type="region of interest" description="9 X 22 AA approximate tandem repeats">
    <location>
        <begin position="67"/>
        <end position="281"/>
    </location>
</feature>
<reference key="1">
    <citation type="journal article" date="1997" name="Proc. Natl. Acad. Sci. U.S.A.">
        <title>Both apolipoprotein E and A-I genes are present in a nonmammalian vertebrate and are highly expressed during embryonic development.</title>
        <authorList>
            <person name="Babin P.J."/>
            <person name="Thisse C."/>
            <person name="Durliat M."/>
            <person name="Andre M."/>
            <person name="Akimenko M.-A."/>
            <person name="Thisse B."/>
        </authorList>
    </citation>
    <scope>NUCLEOTIDE SEQUENCE [MRNA]</scope>
    <source>
        <tissue>Embryo</tissue>
    </source>
</reference>
<reference key="2">
    <citation type="journal article" date="2000" name="Eur. J. Biochem.">
        <title>Conserved protein motifs and structural organization of a fish gene homologous to mammalian apolipoprotein E.</title>
        <authorList>
            <person name="Durliat M."/>
            <person name="Andre M."/>
            <person name="Babin P.J."/>
        </authorList>
    </citation>
    <scope>NUCLEOTIDE SEQUENCE [GENOMIC DNA]</scope>
</reference>
<reference key="3">
    <citation type="submission" date="2004-01" db="EMBL/GenBank/DDBJ databases">
        <authorList>
            <consortium name="NIH - Zebrafish Gene Collection (ZGC) project"/>
        </authorList>
    </citation>
    <scope>NUCLEOTIDE SEQUENCE [LARGE SCALE MRNA]</scope>
    <source>
        <tissue>Embryo</tissue>
    </source>
</reference>
<organism>
    <name type="scientific">Danio rerio</name>
    <name type="common">Zebrafish</name>
    <name type="synonym">Brachydanio rerio</name>
    <dbReference type="NCBI Taxonomy" id="7955"/>
    <lineage>
        <taxon>Eukaryota</taxon>
        <taxon>Metazoa</taxon>
        <taxon>Chordata</taxon>
        <taxon>Craniata</taxon>
        <taxon>Vertebrata</taxon>
        <taxon>Euteleostomi</taxon>
        <taxon>Actinopterygii</taxon>
        <taxon>Neopterygii</taxon>
        <taxon>Teleostei</taxon>
        <taxon>Ostariophysi</taxon>
        <taxon>Cypriniformes</taxon>
        <taxon>Danionidae</taxon>
        <taxon>Danioninae</taxon>
        <taxon>Danio</taxon>
    </lineage>
</organism>
<sequence>MRSLVVFFALAVLTGCQARSLFQADAPQPRWEEMVDRFWQYVSELNTQTDGMVQNIKGSQLSRELDTLITDTMAELSSYSENLQTQMTPYASDAAGQLSKDLQLLAGKLQTDMTDAKERSTQYLQELKTMMEQNADDVKNRVGTYTRKLKKRLNKDTEEIRNTVATYMSEMQSRASQNADAVKDRFQPYMSQAQDGATQKLGAISELMKAQAQEVSEQLEVQAGALKEKLEETAENLRTSLEGRVDELTSLLAPYSQKIREQLQEVMDKIKEATAALPTQA</sequence>
<dbReference type="EMBL" id="Y13652">
    <property type="protein sequence ID" value="CAA74003.1"/>
    <property type="molecule type" value="mRNA"/>
</dbReference>
<dbReference type="EMBL" id="AJ236882">
    <property type="protein sequence ID" value="CAB64946.1"/>
    <property type="molecule type" value="Genomic_DNA"/>
</dbReference>
<dbReference type="EMBL" id="BC065592">
    <property type="protein sequence ID" value="AAH65592.1"/>
    <property type="molecule type" value="mRNA"/>
</dbReference>
<dbReference type="RefSeq" id="NP_571173.1">
    <property type="nucleotide sequence ID" value="NM_131098.2"/>
</dbReference>
<dbReference type="RefSeq" id="XP_005158143.1">
    <property type="nucleotide sequence ID" value="XM_005158086.3"/>
</dbReference>
<dbReference type="SMR" id="O42364"/>
<dbReference type="BioGRID" id="78524">
    <property type="interactions" value="1"/>
</dbReference>
<dbReference type="STRING" id="7955.ENSDARP00000058964"/>
<dbReference type="PaxDb" id="7955-ENSDARP00000058964"/>
<dbReference type="Ensembl" id="ENSDART00000058965">
    <property type="protein sequence ID" value="ENSDARP00000058964"/>
    <property type="gene ID" value="ENSDARG00000040295"/>
</dbReference>
<dbReference type="Ensembl" id="ENSDART00000192754">
    <property type="protein sequence ID" value="ENSDARP00000155792"/>
    <property type="gene ID" value="ENSDARG00000040295"/>
</dbReference>
<dbReference type="GeneID" id="30314"/>
<dbReference type="KEGG" id="dre:30314"/>
<dbReference type="AGR" id="ZFIN:ZDB-GENE-980526-368"/>
<dbReference type="CTD" id="30314"/>
<dbReference type="ZFIN" id="ZDB-GENE-980526-368">
    <property type="gene designation" value="apoeb"/>
</dbReference>
<dbReference type="eggNOG" id="ENOG502QVD6">
    <property type="taxonomic scope" value="Eukaryota"/>
</dbReference>
<dbReference type="HOGENOM" id="CLU_066029_1_0_1"/>
<dbReference type="InParanoid" id="O42364"/>
<dbReference type="OMA" id="TYMGEIQ"/>
<dbReference type="OrthoDB" id="9886755at2759"/>
<dbReference type="PhylomeDB" id="O42364"/>
<dbReference type="TreeFam" id="TF334458"/>
<dbReference type="PRO" id="PR:O42364"/>
<dbReference type="Proteomes" id="UP000000437">
    <property type="component" value="Chromosome 16"/>
</dbReference>
<dbReference type="Bgee" id="ENSDARG00000040295">
    <property type="expression patterns" value="Expressed in pharyngeal gill and 72 other cell types or tissues"/>
</dbReference>
<dbReference type="ExpressionAtlas" id="O42364">
    <property type="expression patterns" value="baseline and differential"/>
</dbReference>
<dbReference type="GO" id="GO:0042627">
    <property type="term" value="C:chylomicron"/>
    <property type="evidence" value="ECO:0000318"/>
    <property type="project" value="GO_Central"/>
</dbReference>
<dbReference type="GO" id="GO:0031012">
    <property type="term" value="C:extracellular matrix"/>
    <property type="evidence" value="ECO:0000250"/>
    <property type="project" value="UniProtKB"/>
</dbReference>
<dbReference type="GO" id="GO:0005615">
    <property type="term" value="C:extracellular space"/>
    <property type="evidence" value="ECO:0000250"/>
    <property type="project" value="UniProtKB"/>
</dbReference>
<dbReference type="GO" id="GO:1903561">
    <property type="term" value="C:extracellular vesicle"/>
    <property type="evidence" value="ECO:0000318"/>
    <property type="project" value="GO_Central"/>
</dbReference>
<dbReference type="GO" id="GO:0034364">
    <property type="term" value="C:high-density lipoprotein particle"/>
    <property type="evidence" value="ECO:0000250"/>
    <property type="project" value="UniProtKB"/>
</dbReference>
<dbReference type="GO" id="GO:0034363">
    <property type="term" value="C:intermediate-density lipoprotein particle"/>
    <property type="evidence" value="ECO:0000250"/>
    <property type="project" value="UniProtKB"/>
</dbReference>
<dbReference type="GO" id="GO:0034362">
    <property type="term" value="C:low-density lipoprotein particle"/>
    <property type="evidence" value="ECO:0000250"/>
    <property type="project" value="UniProtKB"/>
</dbReference>
<dbReference type="GO" id="GO:0034361">
    <property type="term" value="C:very-low-density lipoprotein particle"/>
    <property type="evidence" value="ECO:0000250"/>
    <property type="project" value="UniProtKB"/>
</dbReference>
<dbReference type="GO" id="GO:0120020">
    <property type="term" value="F:cholesterol transfer activity"/>
    <property type="evidence" value="ECO:0000318"/>
    <property type="project" value="GO_Central"/>
</dbReference>
<dbReference type="GO" id="GO:0043395">
    <property type="term" value="F:heparan sulfate proteoglycan binding"/>
    <property type="evidence" value="ECO:0000250"/>
    <property type="project" value="UniProtKB"/>
</dbReference>
<dbReference type="GO" id="GO:0008201">
    <property type="term" value="F:heparin binding"/>
    <property type="evidence" value="ECO:0000250"/>
    <property type="project" value="UniProtKB"/>
</dbReference>
<dbReference type="GO" id="GO:0042802">
    <property type="term" value="F:identical protein binding"/>
    <property type="evidence" value="ECO:0000250"/>
    <property type="project" value="UniProtKB"/>
</dbReference>
<dbReference type="GO" id="GO:0050750">
    <property type="term" value="F:low-density lipoprotein particle receptor binding"/>
    <property type="evidence" value="ECO:0000250"/>
    <property type="project" value="UniProtKB"/>
</dbReference>
<dbReference type="GO" id="GO:0060228">
    <property type="term" value="F:phosphatidylcholine-sterol O-acyltransferase activator activity"/>
    <property type="evidence" value="ECO:0000318"/>
    <property type="project" value="GO_Central"/>
</dbReference>
<dbReference type="GO" id="GO:0005543">
    <property type="term" value="F:phospholipid binding"/>
    <property type="evidence" value="ECO:0000318"/>
    <property type="project" value="GO_Central"/>
</dbReference>
<dbReference type="GO" id="GO:0055090">
    <property type="term" value="P:acylglycerol homeostasis"/>
    <property type="evidence" value="ECO:0000318"/>
    <property type="project" value="GO_Central"/>
</dbReference>
<dbReference type="GO" id="GO:0033344">
    <property type="term" value="P:cholesterol efflux"/>
    <property type="evidence" value="ECO:0000250"/>
    <property type="project" value="UniProtKB"/>
</dbReference>
<dbReference type="GO" id="GO:0008203">
    <property type="term" value="P:cholesterol metabolic process"/>
    <property type="evidence" value="ECO:0000318"/>
    <property type="project" value="GO_Central"/>
</dbReference>
<dbReference type="GO" id="GO:0034382">
    <property type="term" value="P:chylomicron remnant clearance"/>
    <property type="evidence" value="ECO:0000250"/>
    <property type="project" value="UniProtKB"/>
</dbReference>
<dbReference type="GO" id="GO:0034380">
    <property type="term" value="P:high-density lipoprotein particle assembly"/>
    <property type="evidence" value="ECO:0000250"/>
    <property type="project" value="UniProtKB"/>
</dbReference>
<dbReference type="GO" id="GO:0071831">
    <property type="term" value="P:intermediate-density lipoprotein particle clearance"/>
    <property type="evidence" value="ECO:0000250"/>
    <property type="project" value="UniProtKB"/>
</dbReference>
<dbReference type="GO" id="GO:0042158">
    <property type="term" value="P:lipoprotein biosynthetic process"/>
    <property type="evidence" value="ECO:0000250"/>
    <property type="project" value="UniProtKB"/>
</dbReference>
<dbReference type="GO" id="GO:0033700">
    <property type="term" value="P:phospholipid efflux"/>
    <property type="evidence" value="ECO:0000318"/>
    <property type="project" value="GO_Central"/>
</dbReference>
<dbReference type="GO" id="GO:0071830">
    <property type="term" value="P:triglyceride-rich lipoprotein particle clearance"/>
    <property type="evidence" value="ECO:0000250"/>
    <property type="project" value="UniProtKB"/>
</dbReference>
<dbReference type="GO" id="GO:0034447">
    <property type="term" value="P:very-low-density lipoprotein particle clearance"/>
    <property type="evidence" value="ECO:0000250"/>
    <property type="project" value="UniProtKB"/>
</dbReference>
<dbReference type="FunFam" id="1.20.5.20:FF:000001">
    <property type="entry name" value="apolipoprotein A-I"/>
    <property type="match status" value="1"/>
</dbReference>
<dbReference type="FunFam" id="1.20.120.20:FF:000010">
    <property type="entry name" value="Apolipoprotein E"/>
    <property type="match status" value="1"/>
</dbReference>
<dbReference type="Gene3D" id="1.20.5.20">
    <property type="match status" value="1"/>
</dbReference>
<dbReference type="Gene3D" id="1.20.120.20">
    <property type="entry name" value="Apolipoprotein"/>
    <property type="match status" value="1"/>
</dbReference>
<dbReference type="InterPro" id="IPR000074">
    <property type="entry name" value="ApoA_E"/>
</dbReference>
<dbReference type="InterPro" id="IPR050163">
    <property type="entry name" value="Apolipoprotein_A1/A4/E"/>
</dbReference>
<dbReference type="PANTHER" id="PTHR18976">
    <property type="entry name" value="APOLIPOPROTEIN"/>
    <property type="match status" value="1"/>
</dbReference>
<dbReference type="PANTHER" id="PTHR18976:SF2">
    <property type="entry name" value="APOLIPOPROTEIN E"/>
    <property type="match status" value="1"/>
</dbReference>
<dbReference type="Pfam" id="PF01442">
    <property type="entry name" value="Apolipoprotein"/>
    <property type="match status" value="1"/>
</dbReference>
<dbReference type="SUPFAM" id="SSF58113">
    <property type="entry name" value="Apolipoprotein A-I"/>
    <property type="match status" value="1"/>
</dbReference>
<proteinExistence type="evidence at transcript level"/>
<evidence type="ECO:0000250" key="1">
    <source>
        <dbReference type="UniProtKB" id="P02649"/>
    </source>
</evidence>
<evidence type="ECO:0000255" key="2"/>
<evidence type="ECO:0000305" key="3"/>
<name>APOEB_DANRE</name>
<gene>
    <name type="primary">apoeb</name>
    <name type="synonym">apoe</name>
</gene>
<accession>O42364</accession>
<comment type="function">
    <text evidence="1">APOE is an apolipoprotein, a protein associating with lipid particles, that mainly functions in lipoprotein-mediated lipid transport between organs via the plasma and interstitial fluids. APOE is a core component of plasma lipoproteins and is involved in their production, conversion and clearance. Apolipoproteins are amphipathic molecules that interact both with lipids of the lipoprotein particle core and the aqueous environment of the plasma.</text>
</comment>
<comment type="subunit">
    <text evidence="1">Homotetramer.</text>
</comment>
<comment type="subcellular location">
    <subcellularLocation>
        <location evidence="1">Secreted</location>
    </subcellularLocation>
    <subcellularLocation>
        <location evidence="1">Secreted</location>
        <location evidence="1">Extracellular space</location>
    </subcellularLocation>
    <subcellularLocation>
        <location evidence="1">Secreted</location>
        <location evidence="1">Extracellular space</location>
        <location evidence="1">Extracellular matrix</location>
    </subcellularLocation>
</comment>
<comment type="developmental stage">
    <text>Highly expressed in the yolk syncytial layer during embryonic (starting at the blastula stage) and early larval development, an extraembryonic structure implicated in embryonic and larval nutrition. Also observed in the deep cell layer during blastula stage, in numerous ectodermal derivatives after gastrulation, and after 3 days of development in a limited number of cells both in brain and in the eyes.</text>
</comment>
<comment type="similarity">
    <text evidence="3">Belongs to the apolipoprotein A1/A4/E family.</text>
</comment>
<keyword id="KW-0272">Extracellular matrix</keyword>
<keyword id="KW-0445">Lipid transport</keyword>
<keyword id="KW-0446">Lipid-binding</keyword>
<keyword id="KW-1185">Reference proteome</keyword>
<keyword id="KW-0677">Repeat</keyword>
<keyword id="KW-0964">Secreted</keyword>
<keyword id="KW-0732">Signal</keyword>
<keyword id="KW-0813">Transport</keyword>
<protein>
    <recommendedName>
        <fullName>Apolipoprotein Eb</fullName>
        <shortName>Apo-Eb</shortName>
    </recommendedName>
</protein>